<organism>
    <name type="scientific">Ophiocordyceps sp. (strain BCC 1869)</name>
    <name type="common">Entomopathogenic fungus</name>
    <dbReference type="NCBI Taxonomy" id="1590024"/>
    <lineage>
        <taxon>Eukaryota</taxon>
        <taxon>Fungi</taxon>
        <taxon>Dikarya</taxon>
        <taxon>Ascomycota</taxon>
        <taxon>Pezizomycotina</taxon>
        <taxon>Sordariomycetes</taxon>
        <taxon>Hypocreomycetidae</taxon>
        <taxon>Hypocreales</taxon>
        <taxon>Ophiocordycipitaceae</taxon>
        <taxon>Ophiocordyceps</taxon>
    </lineage>
</organism>
<gene>
    <name evidence="10" type="primary">MFS1</name>
</gene>
<accession>A0A0C4VYV1</accession>
<proteinExistence type="evidence at protein level"/>
<sequence length="449" mass="49084">MTHSSSNEHEKEDDRRASDDMMDRDDQNAKEEQDVSKDAPPVNPWDPSQFPDGGFKAWSVVAGGFCSLFCSFGWINCIGIFQQYYQSDYLRGYSSSTISWIASLELFILFAGGLVVGRVYDRYGPRYILLFGTFMHVFGLMMASLSTEYYQILLSQGICSPIGISCLFTPAVNCIATWFRKKRGLANGIVAAGSSLGGVIFPIMFDRLIPRVGFPWAMRIGAFLILFLLIIANLTVVSRIPPMPKPITAKQYLAPFQERTYLLTTIAAMIFVLGLFLPINYIQAQAVEFGMDPSLANYLIPILNAASLFGRTVPGFVADKIGPYNVHTFMCFFSSVVAFALWLPAASNAPIIVFAALYGFGSGAFVAILPTLIAQISDIKEIGLRIGMEFGVLSLPALVSNPIGGAFVAHDNGGYRSCQIWTGCITMLGAILFVVARISLGGPSLMKKV</sequence>
<comment type="function">
    <text evidence="7">MFS-type transporter that mediates the secretion of the 4 major naphthoquinone derivatives produced, erythrostominone (NQ1), deoxyerythrostominone (NQ2), epierythrostominol (NQ4), and deoxyerythrostominol (NQ5), as well as of 3 newly identified naphthoquinone derivatives termed NQ7, NQ8 and NQ9.</text>
</comment>
<comment type="catalytic activity">
    <reaction evidence="7">
        <text>erythrostominone(in) = erythrostominone(out)</text>
        <dbReference type="Rhea" id="RHEA:74987"/>
        <dbReference type="ChEBI" id="CHEBI:194114"/>
    </reaction>
</comment>
<comment type="catalytic activity">
    <reaction evidence="7">
        <text>deoxyerythrostominone(in) = deoxyerythrostominone(out)</text>
        <dbReference type="Rhea" id="RHEA:74991"/>
        <dbReference type="ChEBI" id="CHEBI:194115"/>
    </reaction>
</comment>
<comment type="catalytic activity">
    <reaction evidence="7">
        <text>epierythrostominol(in) = epierythrostominol(out)</text>
        <dbReference type="Rhea" id="RHEA:74995"/>
        <dbReference type="ChEBI" id="CHEBI:194116"/>
    </reaction>
</comment>
<comment type="catalytic activity">
    <reaction evidence="7">
        <text>deoxyerythrostominol(in) = deoxyerythrostominol(out)</text>
        <dbReference type="Rhea" id="RHEA:74999"/>
        <dbReference type="ChEBI" id="CHEBI:194117"/>
    </reaction>
</comment>
<comment type="subcellular location">
    <subcellularLocation>
        <location evidence="12">Cell membrane</location>
        <topology evidence="1">Multi-pass membrane protein</topology>
    </subcellularLocation>
</comment>
<comment type="induction">
    <text evidence="6">Expression is dramatically up-regulated (29-fold) during the naphthoquinone-producing stage (on potato dextrose agar) compared with the naphthoquinone-nonproducing stage (on complete medium agar).</text>
</comment>
<comment type="biotechnology">
    <text evidence="4 5 6 8 9">Fungal naphthoquinones have a broad range of biological activities, including antibacterial, insecticidal, and anti-malarial activities (against the protozoa Plasmodium falciparum) (PubMed:16231877, PubMed:21823977, PubMed:9000335, Ref.3). Moreover, these pigments have a deep red color under acidic conditions but intense purple in basic environments; such color characteristics are attractive to the pigment industry (PubMed:15891934, PubMed:16231877, PubMed:21823977).</text>
</comment>
<comment type="similarity">
    <text evidence="11">Belongs to the major facilitator superfamily. Monocarboxylate porter (TC 2.A.1.13) family.</text>
</comment>
<protein>
    <recommendedName>
        <fullName evidence="10">MFS-type transporter 1</fullName>
    </recommendedName>
</protein>
<name>MFS1_OPHS1</name>
<keyword id="KW-1003">Cell membrane</keyword>
<keyword id="KW-0325">Glycoprotein</keyword>
<keyword id="KW-0472">Membrane</keyword>
<keyword id="KW-0812">Transmembrane</keyword>
<keyword id="KW-1133">Transmembrane helix</keyword>
<keyword id="KW-0813">Transport</keyword>
<feature type="chain" id="PRO_0000457515" description="MFS-type transporter 1">
    <location>
        <begin position="1"/>
        <end position="449"/>
    </location>
</feature>
<feature type="transmembrane region" description="Helical" evidence="1">
    <location>
        <begin position="61"/>
        <end position="81"/>
    </location>
</feature>
<feature type="transmembrane region" description="Helical" evidence="1">
    <location>
        <begin position="97"/>
        <end position="117"/>
    </location>
</feature>
<feature type="transmembrane region" description="Helical" evidence="1">
    <location>
        <begin position="127"/>
        <end position="147"/>
    </location>
</feature>
<feature type="transmembrane region" description="Helical" evidence="1">
    <location>
        <begin position="152"/>
        <end position="172"/>
    </location>
</feature>
<feature type="transmembrane region" description="Helical" evidence="1">
    <location>
        <begin position="185"/>
        <end position="205"/>
    </location>
</feature>
<feature type="transmembrane region" description="Helical" evidence="1">
    <location>
        <begin position="212"/>
        <end position="232"/>
    </location>
</feature>
<feature type="transmembrane region" description="Helical" evidence="1">
    <location>
        <begin position="262"/>
        <end position="282"/>
    </location>
</feature>
<feature type="transmembrane region" description="Helical" evidence="1">
    <location>
        <begin position="298"/>
        <end position="318"/>
    </location>
</feature>
<feature type="transmembrane region" description="Helical" evidence="1">
    <location>
        <begin position="326"/>
        <end position="346"/>
    </location>
</feature>
<feature type="transmembrane region" description="Helical" evidence="1">
    <location>
        <begin position="349"/>
        <end position="369"/>
    </location>
</feature>
<feature type="transmembrane region" description="Helical" evidence="1">
    <location>
        <begin position="390"/>
        <end position="410"/>
    </location>
</feature>
<feature type="transmembrane region" description="Helical" evidence="1">
    <location>
        <begin position="420"/>
        <end position="440"/>
    </location>
</feature>
<feature type="region of interest" description="Disordered" evidence="3">
    <location>
        <begin position="1"/>
        <end position="43"/>
    </location>
</feature>
<feature type="compositionally biased region" description="Basic and acidic residues" evidence="3">
    <location>
        <begin position="1"/>
        <end position="37"/>
    </location>
</feature>
<feature type="glycosylation site" description="N-linked (GlcNAc...) asparagine" evidence="2">
    <location>
        <position position="233"/>
    </location>
</feature>
<reference key="1">
    <citation type="journal article" date="2015" name="World J. Microbiol. Biotechnol.">
        <title>Production and secretion of naphthoquinones is mediated by the MFS transporter MFS1 in the entomopathogenic fungus Ophiocordyceps sp. BCC1869.</title>
        <authorList>
            <person name="Khaokhajorn P."/>
            <person name="Samipak S."/>
            <person name="Nithithanasilp S."/>
            <person name="Tanticharoen M."/>
            <person name="Amnuaykanjanasin A."/>
        </authorList>
    </citation>
    <scope>NUCLEOTIDE SEQUENCE [GENOMIC DNA]</scope>
    <scope>FUNCTION</scope>
    <scope>TRANSPORTER ACTIVITY</scope>
    <source>
        <strain>BCC 1869</strain>
    </source>
</reference>
<reference key="2">
    <citation type="journal article" date="1997" name="Arch. Microbiol.">
        <title>Respiratory stimulation and generation of superoxide radicals in Pseudomonas aeruginosa by fungal naphthoquinones.</title>
        <authorList>
            <person name="Haraguchi H."/>
            <person name="Yokoyama K."/>
            <person name="Oike S."/>
            <person name="Ito M."/>
            <person name="Nozaki H."/>
        </authorList>
    </citation>
    <scope>BIOTECHNOLOGY</scope>
</reference>
<reference key="3">
    <citation type="journal article" date="1999" name="Phytochemistry">
        <title>Bioactive naphthoquinones from Cordyceps unilateralis.</title>
        <authorList>
            <person name="Kittakoop P."/>
            <person name="Punya J."/>
            <person name="Kongsaeree P."/>
            <person name="Lertwerawat Y."/>
            <person name="Jintasirikul A."/>
            <person name="Tanticharoen M."/>
            <person name="Thebtaranonth Y."/>
        </authorList>
    </citation>
    <scope>BIOTECHNOLOGY</scope>
</reference>
<reference key="4">
    <citation type="journal article" date="2005" name="Acc. Chem. Res.">
        <title>Bioactive substances from insect pathogenic fungi.</title>
        <authorList>
            <person name="Isaka M."/>
            <person name="Kittakoop P."/>
            <person name="Kirtikara K."/>
            <person name="Hywel-Jones N.L."/>
            <person name="Thebtaranonth Y."/>
        </authorList>
    </citation>
    <scope>BIOTECHNOLOGY</scope>
</reference>
<reference key="5">
    <citation type="journal article" date="2005" name="J. Ind. Microbiol. Biotechnol.">
        <title>Production of red pigments by the insect pathogenic fungus Cordyceps unilateralis BCC 1869.</title>
        <authorList>
            <person name="Unagul P."/>
            <person name="Wongsa P."/>
            <person name="Kittakoop P."/>
            <person name="Intamas S."/>
            <person name="Srikitikulchai P."/>
            <person name="Tanticharoen M."/>
        </authorList>
    </citation>
    <scope>BIOTECHNOLOGY</scope>
</reference>
<reference key="6">
    <citation type="journal article" date="2011" name="Can. J. Microbiol.">
        <title>Genes differentially expressed under naphthoquinone-producing conditions in the entomopathogenic fungus Ophiocordyceps unilateralis.</title>
        <authorList>
            <person name="Amnuaykanjanasin A."/>
            <person name="Panchanawaporn S."/>
            <person name="Chutrakul C."/>
            <person name="Tanticharoen M."/>
        </authorList>
    </citation>
    <scope>INDUCTION</scope>
    <scope>BIOTECHNOLOGY</scope>
</reference>
<dbReference type="EMBL" id="KJ466963">
    <property type="protein sequence ID" value="AJA91065.1"/>
    <property type="molecule type" value="Genomic_DNA"/>
</dbReference>
<dbReference type="SMR" id="A0A0C4VYV1"/>
<dbReference type="GO" id="GO:0005886">
    <property type="term" value="C:plasma membrane"/>
    <property type="evidence" value="ECO:0007669"/>
    <property type="project" value="UniProtKB-SubCell"/>
</dbReference>
<dbReference type="GO" id="GO:0022857">
    <property type="term" value="F:transmembrane transporter activity"/>
    <property type="evidence" value="ECO:0007669"/>
    <property type="project" value="InterPro"/>
</dbReference>
<dbReference type="CDD" id="cd17352">
    <property type="entry name" value="MFS_MCT_SLC16"/>
    <property type="match status" value="1"/>
</dbReference>
<dbReference type="Gene3D" id="1.20.1250.20">
    <property type="entry name" value="MFS general substrate transporter like domains"/>
    <property type="match status" value="2"/>
</dbReference>
<dbReference type="InterPro" id="IPR011701">
    <property type="entry name" value="MFS"/>
</dbReference>
<dbReference type="InterPro" id="IPR020846">
    <property type="entry name" value="MFS_dom"/>
</dbReference>
<dbReference type="InterPro" id="IPR036259">
    <property type="entry name" value="MFS_trans_sf"/>
</dbReference>
<dbReference type="InterPro" id="IPR050327">
    <property type="entry name" value="Proton-linked_MCT"/>
</dbReference>
<dbReference type="PANTHER" id="PTHR11360:SF224">
    <property type="entry name" value="MAJOR FACILITATOR SUPERFAMILY (MFS) PROFILE DOMAIN-CONTAINING PROTEIN-RELATED"/>
    <property type="match status" value="1"/>
</dbReference>
<dbReference type="PANTHER" id="PTHR11360">
    <property type="entry name" value="MONOCARBOXYLATE TRANSPORTER"/>
    <property type="match status" value="1"/>
</dbReference>
<dbReference type="Pfam" id="PF07690">
    <property type="entry name" value="MFS_1"/>
    <property type="match status" value="1"/>
</dbReference>
<dbReference type="SUPFAM" id="SSF103473">
    <property type="entry name" value="MFS general substrate transporter"/>
    <property type="match status" value="1"/>
</dbReference>
<dbReference type="PROSITE" id="PS50850">
    <property type="entry name" value="MFS"/>
    <property type="match status" value="1"/>
</dbReference>
<evidence type="ECO:0000255" key="1"/>
<evidence type="ECO:0000255" key="2">
    <source>
        <dbReference type="PROSITE-ProRule" id="PRU00498"/>
    </source>
</evidence>
<evidence type="ECO:0000256" key="3">
    <source>
        <dbReference type="SAM" id="MobiDB-lite"/>
    </source>
</evidence>
<evidence type="ECO:0000269" key="4">
    <source>
    </source>
</evidence>
<evidence type="ECO:0000269" key="5">
    <source>
    </source>
</evidence>
<evidence type="ECO:0000269" key="6">
    <source>
    </source>
</evidence>
<evidence type="ECO:0000269" key="7">
    <source>
    </source>
</evidence>
<evidence type="ECO:0000269" key="8">
    <source>
    </source>
</evidence>
<evidence type="ECO:0000269" key="9">
    <source ref="3"/>
</evidence>
<evidence type="ECO:0000303" key="10">
    <source>
    </source>
</evidence>
<evidence type="ECO:0000305" key="11"/>
<evidence type="ECO:0000305" key="12">
    <source>
    </source>
</evidence>